<gene>
    <name evidence="1" type="primary">tauB</name>
    <name type="ordered locus">CV_2857</name>
</gene>
<protein>
    <recommendedName>
        <fullName evidence="1">Taurine import ATP-binding protein TauB</fullName>
        <ecNumber evidence="1">7.6.2.7</ecNumber>
    </recommendedName>
</protein>
<proteinExistence type="inferred from homology"/>
<dbReference type="EC" id="7.6.2.7" evidence="1"/>
<dbReference type="EMBL" id="AE016825">
    <property type="protein sequence ID" value="AAQ60525.1"/>
    <property type="molecule type" value="Genomic_DNA"/>
</dbReference>
<dbReference type="RefSeq" id="WP_011136404.1">
    <property type="nucleotide sequence ID" value="NC_005085.1"/>
</dbReference>
<dbReference type="SMR" id="Q7NU46"/>
<dbReference type="STRING" id="243365.CV_2857"/>
<dbReference type="KEGG" id="cvi:CV_2857"/>
<dbReference type="eggNOG" id="COG4525">
    <property type="taxonomic scope" value="Bacteria"/>
</dbReference>
<dbReference type="HOGENOM" id="CLU_000604_1_22_4"/>
<dbReference type="OrthoDB" id="9783039at2"/>
<dbReference type="Proteomes" id="UP000001424">
    <property type="component" value="Chromosome"/>
</dbReference>
<dbReference type="GO" id="GO:0005886">
    <property type="term" value="C:plasma membrane"/>
    <property type="evidence" value="ECO:0007669"/>
    <property type="project" value="UniProtKB-SubCell"/>
</dbReference>
<dbReference type="GO" id="GO:0015411">
    <property type="term" value="F:ABC-type taurine transporter transporter activity"/>
    <property type="evidence" value="ECO:0007669"/>
    <property type="project" value="UniProtKB-EC"/>
</dbReference>
<dbReference type="GO" id="GO:0005524">
    <property type="term" value="F:ATP binding"/>
    <property type="evidence" value="ECO:0007669"/>
    <property type="project" value="UniProtKB-KW"/>
</dbReference>
<dbReference type="GO" id="GO:0016887">
    <property type="term" value="F:ATP hydrolysis activity"/>
    <property type="evidence" value="ECO:0007669"/>
    <property type="project" value="InterPro"/>
</dbReference>
<dbReference type="CDD" id="cd03293">
    <property type="entry name" value="ABC_NrtD_SsuB_transporters"/>
    <property type="match status" value="1"/>
</dbReference>
<dbReference type="Gene3D" id="3.40.50.300">
    <property type="entry name" value="P-loop containing nucleotide triphosphate hydrolases"/>
    <property type="match status" value="1"/>
</dbReference>
<dbReference type="InterPro" id="IPR003593">
    <property type="entry name" value="AAA+_ATPase"/>
</dbReference>
<dbReference type="InterPro" id="IPR003439">
    <property type="entry name" value="ABC_transporter-like_ATP-bd"/>
</dbReference>
<dbReference type="InterPro" id="IPR017871">
    <property type="entry name" value="ABC_transporter-like_CS"/>
</dbReference>
<dbReference type="InterPro" id="IPR050166">
    <property type="entry name" value="ABC_transporter_ATP-bind"/>
</dbReference>
<dbReference type="InterPro" id="IPR027417">
    <property type="entry name" value="P-loop_NTPase"/>
</dbReference>
<dbReference type="NCBIfam" id="NF008421">
    <property type="entry name" value="PRK11248.1"/>
    <property type="match status" value="1"/>
</dbReference>
<dbReference type="PANTHER" id="PTHR42788:SF18">
    <property type="entry name" value="TAURINE IMPORT ATP-BINDING PROTEIN TAUB"/>
    <property type="match status" value="1"/>
</dbReference>
<dbReference type="PANTHER" id="PTHR42788">
    <property type="entry name" value="TAURINE IMPORT ATP-BINDING PROTEIN-RELATED"/>
    <property type="match status" value="1"/>
</dbReference>
<dbReference type="Pfam" id="PF00005">
    <property type="entry name" value="ABC_tran"/>
    <property type="match status" value="1"/>
</dbReference>
<dbReference type="SMART" id="SM00382">
    <property type="entry name" value="AAA"/>
    <property type="match status" value="1"/>
</dbReference>
<dbReference type="SUPFAM" id="SSF52540">
    <property type="entry name" value="P-loop containing nucleoside triphosphate hydrolases"/>
    <property type="match status" value="1"/>
</dbReference>
<dbReference type="PROSITE" id="PS00211">
    <property type="entry name" value="ABC_TRANSPORTER_1"/>
    <property type="match status" value="1"/>
</dbReference>
<dbReference type="PROSITE" id="PS50893">
    <property type="entry name" value="ABC_TRANSPORTER_2"/>
    <property type="match status" value="1"/>
</dbReference>
<dbReference type="PROSITE" id="PS51250">
    <property type="entry name" value="TAUB"/>
    <property type="match status" value="1"/>
</dbReference>
<feature type="chain" id="PRO_0000093006" description="Taurine import ATP-binding protein TauB">
    <location>
        <begin position="1"/>
        <end position="261"/>
    </location>
</feature>
<feature type="domain" description="ABC transporter" evidence="1">
    <location>
        <begin position="4"/>
        <end position="233"/>
    </location>
</feature>
<feature type="binding site" evidence="1">
    <location>
        <begin position="38"/>
        <end position="45"/>
    </location>
    <ligand>
        <name>ATP</name>
        <dbReference type="ChEBI" id="CHEBI:30616"/>
    </ligand>
</feature>
<reference key="1">
    <citation type="journal article" date="2003" name="Proc. Natl. Acad. Sci. U.S.A.">
        <title>The complete genome sequence of Chromobacterium violaceum reveals remarkable and exploitable bacterial adaptability.</title>
        <authorList>
            <person name="Vasconcelos A.T.R."/>
            <person name="de Almeida D.F."/>
            <person name="Hungria M."/>
            <person name="Guimaraes C.T."/>
            <person name="Antonio R.V."/>
            <person name="Almeida F.C."/>
            <person name="de Almeida L.G.P."/>
            <person name="de Almeida R."/>
            <person name="Alves-Gomes J.A."/>
            <person name="Andrade E.M."/>
            <person name="Araripe J."/>
            <person name="de Araujo M.F.F."/>
            <person name="Astolfi-Filho S."/>
            <person name="Azevedo V."/>
            <person name="Baptista A.J."/>
            <person name="Bataus L.A.M."/>
            <person name="Batista J.S."/>
            <person name="Belo A."/>
            <person name="van den Berg C."/>
            <person name="Bogo M."/>
            <person name="Bonatto S."/>
            <person name="Bordignon J."/>
            <person name="Brigido M.M."/>
            <person name="Brito C.A."/>
            <person name="Brocchi M."/>
            <person name="Burity H.A."/>
            <person name="Camargo A.A."/>
            <person name="Cardoso D.D.P."/>
            <person name="Carneiro N.P."/>
            <person name="Carraro D.M."/>
            <person name="Carvalho C.M.B."/>
            <person name="Cascardo J.C.M."/>
            <person name="Cavada B.S."/>
            <person name="Chueire L.M.O."/>
            <person name="Creczynski-Pasa T.B."/>
            <person name="Cunha-Junior N.C."/>
            <person name="Fagundes N."/>
            <person name="Falcao C.L."/>
            <person name="Fantinatti F."/>
            <person name="Farias I.P."/>
            <person name="Felipe M.S.S."/>
            <person name="Ferrari L.P."/>
            <person name="Ferro J.A."/>
            <person name="Ferro M.I.T."/>
            <person name="Franco G.R."/>
            <person name="Freitas N.S.A."/>
            <person name="Furlan L.R."/>
            <person name="Gazzinelli R.T."/>
            <person name="Gomes E.A."/>
            <person name="Goncalves P.R."/>
            <person name="Grangeiro T.B."/>
            <person name="Grattapaglia D."/>
            <person name="Grisard E.C."/>
            <person name="Hanna E.S."/>
            <person name="Jardim S.N."/>
            <person name="Laurino J."/>
            <person name="Leoi L.C.T."/>
            <person name="Lima L.F.A."/>
            <person name="Loureiro M.F."/>
            <person name="Lyra M.C.C.P."/>
            <person name="Madeira H.M.F."/>
            <person name="Manfio G.P."/>
            <person name="Maranhao A.Q."/>
            <person name="Martins W.S."/>
            <person name="di Mauro S.M.Z."/>
            <person name="de Medeiros S.R.B."/>
            <person name="Meissner R.V."/>
            <person name="Moreira M.A.M."/>
            <person name="Nascimento F.F."/>
            <person name="Nicolas M.F."/>
            <person name="Oliveira J.G."/>
            <person name="Oliveira S.C."/>
            <person name="Paixao R.F.C."/>
            <person name="Parente J.A."/>
            <person name="Pedrosa F.O."/>
            <person name="Pena S.D.J."/>
            <person name="Pereira J.O."/>
            <person name="Pereira M."/>
            <person name="Pinto L.S.R.C."/>
            <person name="Pinto L.S."/>
            <person name="Porto J.I.R."/>
            <person name="Potrich D.P."/>
            <person name="Ramalho-Neto C.E."/>
            <person name="Reis A.M.M."/>
            <person name="Rigo L.U."/>
            <person name="Rondinelli E."/>
            <person name="Santos E.B.P."/>
            <person name="Santos F.R."/>
            <person name="Schneider M.P.C."/>
            <person name="Seuanez H.N."/>
            <person name="Silva A.M.R."/>
            <person name="da Silva A.L.C."/>
            <person name="Silva D.W."/>
            <person name="Silva R."/>
            <person name="Simoes I.C."/>
            <person name="Simon D."/>
            <person name="Soares C.M.A."/>
            <person name="Soares R.B.A."/>
            <person name="Souza E.M."/>
            <person name="Souza K.R.L."/>
            <person name="Souza R.C."/>
            <person name="Steffens M.B.R."/>
            <person name="Steindel M."/>
            <person name="Teixeira S.R."/>
            <person name="Urmenyi T."/>
            <person name="Vettore A."/>
            <person name="Wassem R."/>
            <person name="Zaha A."/>
            <person name="Simpson A.J.G."/>
        </authorList>
    </citation>
    <scope>NUCLEOTIDE SEQUENCE [LARGE SCALE GENOMIC DNA]</scope>
    <source>
        <strain>ATCC 12472 / DSM 30191 / JCM 1249 / CCUG 213 / NBRC 12614 / NCIMB 9131 / NCTC 9757 / MK</strain>
    </source>
</reference>
<keyword id="KW-0067">ATP-binding</keyword>
<keyword id="KW-0997">Cell inner membrane</keyword>
<keyword id="KW-1003">Cell membrane</keyword>
<keyword id="KW-0472">Membrane</keyword>
<keyword id="KW-0547">Nucleotide-binding</keyword>
<keyword id="KW-1185">Reference proteome</keyword>
<keyword id="KW-1278">Translocase</keyword>
<keyword id="KW-0813">Transport</keyword>
<accession>Q7NU46</accession>
<name>TAUB_CHRVO</name>
<sequence>MAALTADRVSVRYPGQAQPALDGVSLNVGPGELAVALGPSGCGKTTLLNLFAGFQFPDSGSVRFGGVPVAGPGAERAVVFQQHALLPWLSALDNVAFGLRLRGVPRAERRELAGRALAQVDLAEAGARYPWQLSGGQKQRVGIARALAGRAGALLMDEPFGALDAFTREQMQELLLKVWAESGSSVFLITHDIEEALFLATELVLMSPGPGRIVKTLRPPFSRRWRAGDSARAIKSDPEFIALREQLLADVFAQRKQEAWA</sequence>
<organism>
    <name type="scientific">Chromobacterium violaceum (strain ATCC 12472 / DSM 30191 / JCM 1249 / CCUG 213 / NBRC 12614 / NCIMB 9131 / NCTC 9757 / MK)</name>
    <dbReference type="NCBI Taxonomy" id="243365"/>
    <lineage>
        <taxon>Bacteria</taxon>
        <taxon>Pseudomonadati</taxon>
        <taxon>Pseudomonadota</taxon>
        <taxon>Betaproteobacteria</taxon>
        <taxon>Neisseriales</taxon>
        <taxon>Chromobacteriaceae</taxon>
        <taxon>Chromobacterium</taxon>
    </lineage>
</organism>
<comment type="function">
    <text evidence="1">Part of the ABC transporter complex TauABC involved in taurine import. Responsible for energy coupling to the transport system.</text>
</comment>
<comment type="catalytic activity">
    <reaction evidence="1">
        <text>taurine(out) + ATP + H2O = taurine(in) + ADP + phosphate + H(+)</text>
        <dbReference type="Rhea" id="RHEA:14613"/>
        <dbReference type="ChEBI" id="CHEBI:15377"/>
        <dbReference type="ChEBI" id="CHEBI:15378"/>
        <dbReference type="ChEBI" id="CHEBI:30616"/>
        <dbReference type="ChEBI" id="CHEBI:43474"/>
        <dbReference type="ChEBI" id="CHEBI:456216"/>
        <dbReference type="ChEBI" id="CHEBI:507393"/>
        <dbReference type="EC" id="7.6.2.7"/>
    </reaction>
</comment>
<comment type="subunit">
    <text evidence="1">The complex is composed of two ATP-binding proteins (TauB), two transmembrane proteins (TauC) and a solute-binding protein (TauA).</text>
</comment>
<comment type="subcellular location">
    <subcellularLocation>
        <location evidence="1">Cell inner membrane</location>
        <topology evidence="1">Peripheral membrane protein</topology>
    </subcellularLocation>
</comment>
<comment type="similarity">
    <text evidence="1">Belongs to the ABC transporter superfamily. Taurine importer (TC 3.A.1.17.1) family.</text>
</comment>
<evidence type="ECO:0000255" key="1">
    <source>
        <dbReference type="HAMAP-Rule" id="MF_01714"/>
    </source>
</evidence>